<sequence length="159" mass="18473">MRCPKCGYNKSSVVDSRQAEEGTTIRRRRECEKCGNRFTTFERLEELPLLVIKKDGTREQFSRDKILNGIIQSAQKRPVSSEDIENCILRIERKIRSEYEDEVSSITIGNLVMDELAELDEITYVRFASVYKSFKDVDEIEELLQQITKRVRSKKSGSV</sequence>
<name>NRDR_STRA3</name>
<comment type="function">
    <text evidence="1">Negatively regulates transcription of bacterial ribonucleotide reductase nrd genes and operons by binding to NrdR-boxes.</text>
</comment>
<comment type="cofactor">
    <cofactor evidence="1">
        <name>Zn(2+)</name>
        <dbReference type="ChEBI" id="CHEBI:29105"/>
    </cofactor>
    <text evidence="1">Binds 1 zinc ion.</text>
</comment>
<comment type="similarity">
    <text evidence="1">Belongs to the NrdR family.</text>
</comment>
<proteinExistence type="inferred from homology"/>
<keyword id="KW-0067">ATP-binding</keyword>
<keyword id="KW-0238">DNA-binding</keyword>
<keyword id="KW-0479">Metal-binding</keyword>
<keyword id="KW-0547">Nucleotide-binding</keyword>
<keyword id="KW-0678">Repressor</keyword>
<keyword id="KW-0804">Transcription</keyword>
<keyword id="KW-0805">Transcription regulation</keyword>
<keyword id="KW-0862">Zinc</keyword>
<keyword id="KW-0863">Zinc-finger</keyword>
<accession>Q8E3T6</accession>
<organism>
    <name type="scientific">Streptococcus agalactiae serotype III (strain NEM316)</name>
    <dbReference type="NCBI Taxonomy" id="211110"/>
    <lineage>
        <taxon>Bacteria</taxon>
        <taxon>Bacillati</taxon>
        <taxon>Bacillota</taxon>
        <taxon>Bacilli</taxon>
        <taxon>Lactobacillales</taxon>
        <taxon>Streptococcaceae</taxon>
        <taxon>Streptococcus</taxon>
    </lineage>
</organism>
<evidence type="ECO:0000255" key="1">
    <source>
        <dbReference type="HAMAP-Rule" id="MF_00440"/>
    </source>
</evidence>
<dbReference type="EMBL" id="AL766852">
    <property type="protein sequence ID" value="CAD47329.1"/>
    <property type="molecule type" value="Genomic_DNA"/>
</dbReference>
<dbReference type="RefSeq" id="WP_001203682.1">
    <property type="nucleotide sequence ID" value="NC_004368.1"/>
</dbReference>
<dbReference type="SMR" id="Q8E3T6"/>
<dbReference type="GeneID" id="66886467"/>
<dbReference type="KEGG" id="san:gbs1670"/>
<dbReference type="eggNOG" id="COG1327">
    <property type="taxonomic scope" value="Bacteria"/>
</dbReference>
<dbReference type="HOGENOM" id="CLU_108412_0_0_9"/>
<dbReference type="Proteomes" id="UP000000823">
    <property type="component" value="Chromosome"/>
</dbReference>
<dbReference type="GO" id="GO:0005524">
    <property type="term" value="F:ATP binding"/>
    <property type="evidence" value="ECO:0007669"/>
    <property type="project" value="UniProtKB-KW"/>
</dbReference>
<dbReference type="GO" id="GO:0003677">
    <property type="term" value="F:DNA binding"/>
    <property type="evidence" value="ECO:0007669"/>
    <property type="project" value="UniProtKB-KW"/>
</dbReference>
<dbReference type="GO" id="GO:0008270">
    <property type="term" value="F:zinc ion binding"/>
    <property type="evidence" value="ECO:0007669"/>
    <property type="project" value="UniProtKB-UniRule"/>
</dbReference>
<dbReference type="GO" id="GO:0045892">
    <property type="term" value="P:negative regulation of DNA-templated transcription"/>
    <property type="evidence" value="ECO:0007669"/>
    <property type="project" value="UniProtKB-UniRule"/>
</dbReference>
<dbReference type="HAMAP" id="MF_00440">
    <property type="entry name" value="NrdR"/>
    <property type="match status" value="1"/>
</dbReference>
<dbReference type="InterPro" id="IPR005144">
    <property type="entry name" value="ATP-cone_dom"/>
</dbReference>
<dbReference type="InterPro" id="IPR055173">
    <property type="entry name" value="NrdR-like_N"/>
</dbReference>
<dbReference type="InterPro" id="IPR003796">
    <property type="entry name" value="RNR_NrdR-like"/>
</dbReference>
<dbReference type="NCBIfam" id="TIGR00244">
    <property type="entry name" value="transcriptional regulator NrdR"/>
    <property type="match status" value="1"/>
</dbReference>
<dbReference type="PANTHER" id="PTHR30455">
    <property type="entry name" value="TRANSCRIPTIONAL REPRESSOR NRDR"/>
    <property type="match status" value="1"/>
</dbReference>
<dbReference type="PANTHER" id="PTHR30455:SF2">
    <property type="entry name" value="TRANSCRIPTIONAL REPRESSOR NRDR"/>
    <property type="match status" value="1"/>
</dbReference>
<dbReference type="Pfam" id="PF03477">
    <property type="entry name" value="ATP-cone"/>
    <property type="match status" value="1"/>
</dbReference>
<dbReference type="Pfam" id="PF22811">
    <property type="entry name" value="Zn_ribbon_NrdR"/>
    <property type="match status" value="1"/>
</dbReference>
<dbReference type="PROSITE" id="PS51161">
    <property type="entry name" value="ATP_CONE"/>
    <property type="match status" value="1"/>
</dbReference>
<protein>
    <recommendedName>
        <fullName evidence="1">Transcriptional repressor NrdR</fullName>
    </recommendedName>
</protein>
<gene>
    <name evidence="1" type="primary">nrdR</name>
    <name type="ordered locus">gbs1670</name>
</gene>
<reference key="1">
    <citation type="journal article" date="2002" name="Mol. Microbiol.">
        <title>Genome sequence of Streptococcus agalactiae, a pathogen causing invasive neonatal disease.</title>
        <authorList>
            <person name="Glaser P."/>
            <person name="Rusniok C."/>
            <person name="Buchrieser C."/>
            <person name="Chevalier F."/>
            <person name="Frangeul L."/>
            <person name="Msadek T."/>
            <person name="Zouine M."/>
            <person name="Couve E."/>
            <person name="Lalioui L."/>
            <person name="Poyart C."/>
            <person name="Trieu-Cuot P."/>
            <person name="Kunst F."/>
        </authorList>
    </citation>
    <scope>NUCLEOTIDE SEQUENCE [LARGE SCALE GENOMIC DNA]</scope>
    <source>
        <strain>NEM316</strain>
    </source>
</reference>
<feature type="chain" id="PRO_0000182354" description="Transcriptional repressor NrdR">
    <location>
        <begin position="1"/>
        <end position="159"/>
    </location>
</feature>
<feature type="domain" description="ATP-cone" evidence="1">
    <location>
        <begin position="49"/>
        <end position="139"/>
    </location>
</feature>
<feature type="zinc finger region" evidence="1">
    <location>
        <begin position="3"/>
        <end position="34"/>
    </location>
</feature>